<accession>P97479</accession>
<accession>E9QLP7</accession>
<accession>Q5MJ57</accession>
<feature type="chain" id="PRO_0000123467" description="Unconventional myosin-VIIa">
    <location>
        <begin position="1"/>
        <end position="2215"/>
    </location>
</feature>
<feature type="domain" description="Myosin motor" evidence="7">
    <location>
        <begin position="65"/>
        <end position="741"/>
    </location>
</feature>
<feature type="domain" description="IQ 1" evidence="4">
    <location>
        <begin position="745"/>
        <end position="765"/>
    </location>
</feature>
<feature type="domain" description="IQ 2" evidence="4">
    <location>
        <begin position="768"/>
        <end position="788"/>
    </location>
</feature>
<feature type="domain" description="IQ 3" evidence="4">
    <location>
        <begin position="791"/>
        <end position="811"/>
    </location>
</feature>
<feature type="domain" description="IQ 4" evidence="4">
    <location>
        <begin position="814"/>
        <end position="834"/>
    </location>
</feature>
<feature type="domain" description="IQ 5" evidence="4">
    <location>
        <begin position="837"/>
        <end position="857"/>
    </location>
</feature>
<feature type="domain" description="MyTH4 1" evidence="6">
    <location>
        <begin position="1017"/>
        <end position="1253"/>
    </location>
</feature>
<feature type="domain" description="FERM 1" evidence="3">
    <location>
        <begin position="1258"/>
        <end position="1602"/>
    </location>
</feature>
<feature type="domain" description="SH3" evidence="5">
    <location>
        <begin position="1603"/>
        <end position="1672"/>
    </location>
</feature>
<feature type="domain" description="MyTH4 2" evidence="6">
    <location>
        <begin position="1747"/>
        <end position="1896"/>
    </location>
</feature>
<feature type="domain" description="FERM 2" evidence="3">
    <location>
        <begin position="1902"/>
        <end position="2205"/>
    </location>
</feature>
<feature type="region of interest" description="Actin-binding" evidence="22">
    <location>
        <begin position="632"/>
        <end position="639"/>
    </location>
</feature>
<feature type="region of interest" description="SAH" evidence="2">
    <location>
        <begin position="858"/>
        <end position="935"/>
    </location>
</feature>
<feature type="binding site" evidence="22">
    <location>
        <begin position="158"/>
        <end position="165"/>
    </location>
    <ligand>
        <name>ATP</name>
        <dbReference type="ChEBI" id="CHEBI:30616"/>
    </ligand>
</feature>
<feature type="modified residue" description="Phosphothreonine" evidence="23">
    <location>
        <position position="1563"/>
    </location>
</feature>
<feature type="modified residue" description="Phosphoserine" evidence="23">
    <location>
        <position position="1569"/>
    </location>
</feature>
<feature type="modified residue" description="Phosphothreonine" evidence="23">
    <location>
        <position position="1571"/>
    </location>
</feature>
<feature type="splice variant" id="VSP_042238" description="In isoform 2." evidence="21">
    <location>
        <begin position="1523"/>
        <end position="1560"/>
    </location>
</feature>
<feature type="sequence variant" description="In sh-1.">
    <original>R</original>
    <variation>P</variation>
    <location>
        <position position="241"/>
    </location>
</feature>
<feature type="sequence variant" description="In sh-1.">
    <original>R</original>
    <variation>P</variation>
    <location>
        <position position="502"/>
    </location>
</feature>
<feature type="mutagenesis site" description="Strongly reduced affinity for USH1G." evidence="15">
    <original>A</original>
    <variation>E</variation>
    <location>
        <position position="1189"/>
    </location>
</feature>
<feature type="mutagenesis site" description="Reduced affinity for USH1G." evidence="15">
    <original>F</original>
    <variation>Q</variation>
    <location>
        <position position="1473"/>
    </location>
</feature>
<feature type="sequence conflict" description="In Ref. 1; AAB40708." evidence="22" ref="1">
    <original>L</original>
    <variation>R</variation>
    <location>
        <position position="85"/>
    </location>
</feature>
<feature type="sequence conflict" description="In Ref. 1; AAB40708." evidence="22" ref="1">
    <original>E</original>
    <variation>S</variation>
    <location>
        <position position="238"/>
    </location>
</feature>
<feature type="sequence conflict" description="In Ref. 1; AAB40708." evidence="22" ref="1">
    <original>I</original>
    <variation>V</variation>
    <location>
        <position position="589"/>
    </location>
</feature>
<feature type="sequence conflict" description="In Ref. 1; AAB40708." evidence="22" ref="1">
    <original>V</original>
    <variation>G</variation>
    <location>
        <position position="682"/>
    </location>
</feature>
<feature type="sequence conflict" description="In Ref. 1; AAB40708." evidence="22" ref="1">
    <original>F</original>
    <variation>L</variation>
    <location>
        <position position="1156"/>
    </location>
</feature>
<feature type="helix" evidence="26">
    <location>
        <begin position="828"/>
        <end position="853"/>
    </location>
</feature>
<feature type="helix" evidence="25">
    <location>
        <begin position="866"/>
        <end position="929"/>
    </location>
</feature>
<feature type="helix" evidence="24">
    <location>
        <begin position="1001"/>
        <end position="1008"/>
    </location>
</feature>
<feature type="helix" evidence="24">
    <location>
        <begin position="1032"/>
        <end position="1048"/>
    </location>
</feature>
<feature type="helix" evidence="24">
    <location>
        <begin position="1070"/>
        <end position="1075"/>
    </location>
</feature>
<feature type="turn" evidence="24">
    <location>
        <begin position="1076"/>
        <end position="1079"/>
    </location>
</feature>
<feature type="helix" evidence="24">
    <location>
        <begin position="1084"/>
        <end position="1088"/>
    </location>
</feature>
<feature type="helix" evidence="24">
    <location>
        <begin position="1150"/>
        <end position="1163"/>
    </location>
</feature>
<feature type="helix" evidence="24">
    <location>
        <begin position="1165"/>
        <end position="1167"/>
    </location>
</feature>
<feature type="helix" evidence="24">
    <location>
        <begin position="1168"/>
        <end position="1178"/>
    </location>
</feature>
<feature type="helix" evidence="24">
    <location>
        <begin position="1185"/>
        <end position="1201"/>
    </location>
</feature>
<feature type="turn" evidence="24">
    <location>
        <begin position="1206"/>
        <end position="1208"/>
    </location>
</feature>
<feature type="helix" evidence="24">
    <location>
        <begin position="1209"/>
        <end position="1217"/>
    </location>
</feature>
<feature type="turn" evidence="24">
    <location>
        <begin position="1221"/>
        <end position="1223"/>
    </location>
</feature>
<feature type="helix" evidence="24">
    <location>
        <begin position="1224"/>
        <end position="1237"/>
    </location>
</feature>
<feature type="helix" evidence="24">
    <location>
        <begin position="1246"/>
        <end position="1254"/>
    </location>
</feature>
<feature type="strand" evidence="24">
    <location>
        <begin position="1258"/>
        <end position="1264"/>
    </location>
</feature>
<feature type="strand" evidence="24">
    <location>
        <begin position="1269"/>
        <end position="1274"/>
    </location>
</feature>
<feature type="helix" evidence="24">
    <location>
        <begin position="1280"/>
        <end position="1290"/>
    </location>
</feature>
<feature type="strand" evidence="24">
    <location>
        <begin position="1299"/>
        <end position="1305"/>
    </location>
</feature>
<feature type="strand" evidence="24">
    <location>
        <begin position="1308"/>
        <end position="1313"/>
    </location>
</feature>
<feature type="helix" evidence="24">
    <location>
        <begin position="1319"/>
        <end position="1331"/>
    </location>
</feature>
<feature type="turn" evidence="24">
    <location>
        <begin position="1332"/>
        <end position="1334"/>
    </location>
</feature>
<feature type="helix" evidence="24">
    <location>
        <begin position="1337"/>
        <end position="1339"/>
    </location>
</feature>
<feature type="strand" evidence="24">
    <location>
        <begin position="1343"/>
        <end position="1348"/>
    </location>
</feature>
<feature type="helix" evidence="24">
    <location>
        <begin position="1357"/>
        <end position="1359"/>
    </location>
</feature>
<feature type="helix" evidence="24">
    <location>
        <begin position="1361"/>
        <end position="1376"/>
    </location>
</feature>
<feature type="helix" evidence="24">
    <location>
        <begin position="1385"/>
        <end position="1400"/>
    </location>
</feature>
<feature type="helix" evidence="24">
    <location>
        <begin position="1406"/>
        <end position="1416"/>
    </location>
</feature>
<feature type="helix" evidence="24">
    <location>
        <begin position="1419"/>
        <end position="1421"/>
    </location>
</feature>
<feature type="strand" evidence="24">
    <location>
        <begin position="1424"/>
        <end position="1426"/>
    </location>
</feature>
<feature type="helix" evidence="24">
    <location>
        <begin position="1428"/>
        <end position="1444"/>
    </location>
</feature>
<feature type="helix" evidence="24">
    <location>
        <begin position="1451"/>
        <end position="1465"/>
    </location>
</feature>
<feature type="turn" evidence="24">
    <location>
        <begin position="1467"/>
        <end position="1469"/>
    </location>
</feature>
<feature type="strand" evidence="24">
    <location>
        <begin position="1472"/>
        <end position="1482"/>
    </location>
</feature>
<feature type="strand" evidence="24">
    <location>
        <begin position="1487"/>
        <end position="1494"/>
    </location>
</feature>
<feature type="strand" evidence="24">
    <location>
        <begin position="1497"/>
        <end position="1501"/>
    </location>
</feature>
<feature type="strand" evidence="24">
    <location>
        <begin position="1507"/>
        <end position="1512"/>
    </location>
</feature>
<feature type="helix" evidence="24">
    <location>
        <begin position="1513"/>
        <end position="1515"/>
    </location>
</feature>
<feature type="strand" evidence="24">
    <location>
        <begin position="1516"/>
        <end position="1522"/>
    </location>
</feature>
<feature type="strand" evidence="24">
    <location>
        <begin position="1564"/>
        <end position="1566"/>
    </location>
</feature>
<feature type="strand" evidence="24">
    <location>
        <begin position="1569"/>
        <end position="1574"/>
    </location>
</feature>
<feature type="strand" evidence="24">
    <location>
        <begin position="1579"/>
        <end position="1583"/>
    </location>
</feature>
<feature type="helix" evidence="24">
    <location>
        <begin position="1587"/>
        <end position="1604"/>
    </location>
</feature>
<feature type="strand" evidence="24">
    <location>
        <begin position="1607"/>
        <end position="1612"/>
    </location>
</feature>
<feature type="strand" evidence="24">
    <location>
        <begin position="1632"/>
        <end position="1634"/>
    </location>
</feature>
<feature type="helix" evidence="24">
    <location>
        <begin position="1640"/>
        <end position="1645"/>
    </location>
</feature>
<feature type="strand" evidence="24">
    <location>
        <begin position="1646"/>
        <end position="1653"/>
    </location>
</feature>
<feature type="turn" evidence="24">
    <location>
        <begin position="1654"/>
        <end position="1656"/>
    </location>
</feature>
<feature type="strand" evidence="24">
    <location>
        <begin position="1659"/>
        <end position="1663"/>
    </location>
</feature>
<feature type="helix" evidence="24">
    <location>
        <begin position="1664"/>
        <end position="1666"/>
    </location>
</feature>
<feature type="strand" evidence="24">
    <location>
        <begin position="1667"/>
        <end position="1669"/>
    </location>
</feature>
<feature type="helix" evidence="24">
    <location>
        <begin position="1678"/>
        <end position="1684"/>
    </location>
</feature>
<dbReference type="EMBL" id="U81453">
    <property type="protein sequence ID" value="AAB40708.1"/>
    <property type="molecule type" value="mRNA"/>
</dbReference>
<dbReference type="EMBL" id="AC115022">
    <property type="status" value="NOT_ANNOTATED_CDS"/>
    <property type="molecule type" value="Genomic_DNA"/>
</dbReference>
<dbReference type="EMBL" id="AC119880">
    <property type="status" value="NOT_ANNOTATED_CDS"/>
    <property type="molecule type" value="Genomic_DNA"/>
</dbReference>
<dbReference type="EMBL" id="AC157792">
    <property type="status" value="NOT_ANNOTATED_CDS"/>
    <property type="molecule type" value="Genomic_DNA"/>
</dbReference>
<dbReference type="EMBL" id="AY821853">
    <property type="protein sequence ID" value="AAV87212.1"/>
    <property type="molecule type" value="mRNA"/>
</dbReference>
<dbReference type="CCDS" id="CCDS40026.1">
    <molecule id="P97479-2"/>
</dbReference>
<dbReference type="CCDS" id="CCDS57565.1">
    <molecule id="P97479-1"/>
</dbReference>
<dbReference type="PIR" id="T30870">
    <property type="entry name" value="T30870"/>
</dbReference>
<dbReference type="RefSeq" id="NP_001243010.1">
    <molecule id="P97479-1"/>
    <property type="nucleotide sequence ID" value="NM_001256081.1"/>
</dbReference>
<dbReference type="RefSeq" id="NP_001243012.1">
    <property type="nucleotide sequence ID" value="NM_001256083.1"/>
</dbReference>
<dbReference type="RefSeq" id="NP_032689.2">
    <molecule id="P97479-2"/>
    <property type="nucleotide sequence ID" value="NM_008663.2"/>
</dbReference>
<dbReference type="RefSeq" id="XP_011239993.1">
    <property type="nucleotide sequence ID" value="XM_011241691.1"/>
</dbReference>
<dbReference type="PDB" id="3PVL">
    <property type="method" value="X-ray"/>
    <property type="resolution" value="2.80 A"/>
    <property type="chains" value="A=965-1687"/>
</dbReference>
<dbReference type="PDB" id="5WST">
    <property type="method" value="X-ray"/>
    <property type="resolution" value="2.10 A"/>
    <property type="chains" value="A/B=866-932"/>
</dbReference>
<dbReference type="PDB" id="5WSU">
    <property type="method" value="X-ray"/>
    <property type="resolution" value="3.00 A"/>
    <property type="chains" value="C/D=834-935"/>
</dbReference>
<dbReference type="PDB" id="5WSV">
    <property type="method" value="X-ray"/>
    <property type="resolution" value="2.33 A"/>
    <property type="chains" value="B/D=828-870"/>
</dbReference>
<dbReference type="PDBsum" id="3PVL"/>
<dbReference type="PDBsum" id="5WST"/>
<dbReference type="PDBsum" id="5WSU"/>
<dbReference type="PDBsum" id="5WSV"/>
<dbReference type="SMR" id="P97479"/>
<dbReference type="BioGRID" id="201669">
    <property type="interactions" value="10"/>
</dbReference>
<dbReference type="CORUM" id="P97479"/>
<dbReference type="FunCoup" id="P97479">
    <property type="interactions" value="312"/>
</dbReference>
<dbReference type="IntAct" id="P97479">
    <property type="interactions" value="5"/>
</dbReference>
<dbReference type="MINT" id="P97479"/>
<dbReference type="STRING" id="10090.ENSMUSP00000102745"/>
<dbReference type="iPTMnet" id="P97479"/>
<dbReference type="PhosphoSitePlus" id="P97479"/>
<dbReference type="SwissPalm" id="P97479"/>
<dbReference type="jPOST" id="P97479"/>
<dbReference type="PaxDb" id="10090-ENSMUSP00000102745"/>
<dbReference type="PeptideAtlas" id="P97479"/>
<dbReference type="ProteomicsDB" id="287590">
    <molecule id="P97479-1"/>
</dbReference>
<dbReference type="ProteomicsDB" id="287591">
    <molecule id="P97479-2"/>
</dbReference>
<dbReference type="Pumba" id="P97479"/>
<dbReference type="ABCD" id="P97479">
    <property type="antibodies" value="18 sequenced antibodies"/>
</dbReference>
<dbReference type="Antibodypedia" id="31226">
    <property type="antibodies" value="194 antibodies from 31 providers"/>
</dbReference>
<dbReference type="DNASU" id="17921"/>
<dbReference type="Ensembl" id="ENSMUST00000107127.8">
    <molecule id="P97479-2"/>
    <property type="protein sequence ID" value="ENSMUSP00000102744.2"/>
    <property type="gene ID" value="ENSMUSG00000030761.17"/>
</dbReference>
<dbReference type="Ensembl" id="ENSMUST00000107128.8">
    <molecule id="P97479-1"/>
    <property type="protein sequence ID" value="ENSMUSP00000102745.2"/>
    <property type="gene ID" value="ENSMUSG00000030761.17"/>
</dbReference>
<dbReference type="GeneID" id="17921"/>
<dbReference type="KEGG" id="mmu:17921"/>
<dbReference type="UCSC" id="uc009ijy.2">
    <molecule id="P97479-2"/>
    <property type="organism name" value="mouse"/>
</dbReference>
<dbReference type="UCSC" id="uc009ijz.2">
    <molecule id="P97479-1"/>
    <property type="organism name" value="mouse"/>
</dbReference>
<dbReference type="AGR" id="MGI:104510"/>
<dbReference type="CTD" id="4647"/>
<dbReference type="MGI" id="MGI:104510">
    <property type="gene designation" value="Myo7a"/>
</dbReference>
<dbReference type="VEuPathDB" id="HostDB:ENSMUSG00000030761"/>
<dbReference type="eggNOG" id="KOG4229">
    <property type="taxonomic scope" value="Eukaryota"/>
</dbReference>
<dbReference type="GeneTree" id="ENSGT00940000155350"/>
<dbReference type="InParanoid" id="P97479"/>
<dbReference type="OMA" id="TGFQGRC"/>
<dbReference type="OrthoDB" id="10055605at2759"/>
<dbReference type="PhylomeDB" id="P97479"/>
<dbReference type="TreeFam" id="TF335306"/>
<dbReference type="Reactome" id="R-MMU-2453902">
    <property type="pathway name" value="The canonical retinoid cycle in rods (twilight vision)"/>
</dbReference>
<dbReference type="BioGRID-ORCS" id="17921">
    <property type="hits" value="0 hits in 79 CRISPR screens"/>
</dbReference>
<dbReference type="ChiTaRS" id="Myo7a">
    <property type="organism name" value="mouse"/>
</dbReference>
<dbReference type="EvolutionaryTrace" id="P97479"/>
<dbReference type="PRO" id="PR:P97479"/>
<dbReference type="Proteomes" id="UP000000589">
    <property type="component" value="Chromosome 7"/>
</dbReference>
<dbReference type="RNAct" id="P97479">
    <property type="molecule type" value="protein"/>
</dbReference>
<dbReference type="Bgee" id="ENSMUSG00000030761">
    <property type="expression patterns" value="Expressed in fourth ventricle and 173 other cell types or tissues"/>
</dbReference>
<dbReference type="ExpressionAtlas" id="P97479">
    <property type="expression patterns" value="baseline and differential"/>
</dbReference>
<dbReference type="GO" id="GO:0016324">
    <property type="term" value="C:apical plasma membrane"/>
    <property type="evidence" value="ECO:0000314"/>
    <property type="project" value="MGI"/>
</dbReference>
<dbReference type="GO" id="GO:0005938">
    <property type="term" value="C:cell cortex"/>
    <property type="evidence" value="ECO:0007669"/>
    <property type="project" value="UniProtKB-SubCell"/>
</dbReference>
<dbReference type="GO" id="GO:0005737">
    <property type="term" value="C:cytoplasm"/>
    <property type="evidence" value="ECO:0000314"/>
    <property type="project" value="MGI"/>
</dbReference>
<dbReference type="GO" id="GO:0005829">
    <property type="term" value="C:cytosol"/>
    <property type="evidence" value="ECO:0000250"/>
    <property type="project" value="UniProtKB"/>
</dbReference>
<dbReference type="GO" id="GO:0005765">
    <property type="term" value="C:lysosomal membrane"/>
    <property type="evidence" value="ECO:0000250"/>
    <property type="project" value="UniProtKB"/>
</dbReference>
<dbReference type="GO" id="GO:0042470">
    <property type="term" value="C:melanosome"/>
    <property type="evidence" value="ECO:0000314"/>
    <property type="project" value="MGI"/>
</dbReference>
<dbReference type="GO" id="GO:0005902">
    <property type="term" value="C:microvillus"/>
    <property type="evidence" value="ECO:0000266"/>
    <property type="project" value="MGI"/>
</dbReference>
<dbReference type="GO" id="GO:0031477">
    <property type="term" value="C:myosin VII complex"/>
    <property type="evidence" value="ECO:0007669"/>
    <property type="project" value="Ensembl"/>
</dbReference>
<dbReference type="GO" id="GO:0032391">
    <property type="term" value="C:photoreceptor connecting cilium"/>
    <property type="evidence" value="ECO:0000314"/>
    <property type="project" value="MGI"/>
</dbReference>
<dbReference type="GO" id="GO:0001917">
    <property type="term" value="C:photoreceptor inner segment"/>
    <property type="evidence" value="ECO:0000250"/>
    <property type="project" value="UniProtKB"/>
</dbReference>
<dbReference type="GO" id="GO:0001750">
    <property type="term" value="C:photoreceptor outer segment"/>
    <property type="evidence" value="ECO:0000250"/>
    <property type="project" value="UniProtKB"/>
</dbReference>
<dbReference type="GO" id="GO:0032420">
    <property type="term" value="C:stereocilium"/>
    <property type="evidence" value="ECO:0000314"/>
    <property type="project" value="UniProtKB"/>
</dbReference>
<dbReference type="GO" id="GO:0120044">
    <property type="term" value="C:stereocilium base"/>
    <property type="evidence" value="ECO:0000314"/>
    <property type="project" value="UniProtKB"/>
</dbReference>
<dbReference type="GO" id="GO:0045202">
    <property type="term" value="C:synapse"/>
    <property type="evidence" value="ECO:0000314"/>
    <property type="project" value="UniProtKB"/>
</dbReference>
<dbReference type="GO" id="GO:1990435">
    <property type="term" value="C:upper tip-link density"/>
    <property type="evidence" value="ECO:0007669"/>
    <property type="project" value="Ensembl"/>
</dbReference>
<dbReference type="GO" id="GO:0051015">
    <property type="term" value="F:actin filament binding"/>
    <property type="evidence" value="ECO:0007669"/>
    <property type="project" value="Ensembl"/>
</dbReference>
<dbReference type="GO" id="GO:0043531">
    <property type="term" value="F:ADP binding"/>
    <property type="evidence" value="ECO:0007669"/>
    <property type="project" value="Ensembl"/>
</dbReference>
<dbReference type="GO" id="GO:0005524">
    <property type="term" value="F:ATP binding"/>
    <property type="evidence" value="ECO:0007669"/>
    <property type="project" value="UniProtKB-KW"/>
</dbReference>
<dbReference type="GO" id="GO:0005516">
    <property type="term" value="F:calmodulin binding"/>
    <property type="evidence" value="ECO:0000250"/>
    <property type="project" value="UniProtKB"/>
</dbReference>
<dbReference type="GO" id="GO:0042802">
    <property type="term" value="F:identical protein binding"/>
    <property type="evidence" value="ECO:0007669"/>
    <property type="project" value="Ensembl"/>
</dbReference>
<dbReference type="GO" id="GO:0000146">
    <property type="term" value="F:microfilament motor activity"/>
    <property type="evidence" value="ECO:0007669"/>
    <property type="project" value="Ensembl"/>
</dbReference>
<dbReference type="GO" id="GO:0019904">
    <property type="term" value="F:protein domain specific binding"/>
    <property type="evidence" value="ECO:0000353"/>
    <property type="project" value="MGI"/>
</dbReference>
<dbReference type="GO" id="GO:0030507">
    <property type="term" value="F:spectrin binding"/>
    <property type="evidence" value="ECO:0000266"/>
    <property type="project" value="MGI"/>
</dbReference>
<dbReference type="GO" id="GO:0030048">
    <property type="term" value="P:actin filament-based movement"/>
    <property type="evidence" value="ECO:0007669"/>
    <property type="project" value="Ensembl"/>
</dbReference>
<dbReference type="GO" id="GO:0060088">
    <property type="term" value="P:auditory receptor cell stereocilium organization"/>
    <property type="evidence" value="ECO:0000315"/>
    <property type="project" value="MGI"/>
</dbReference>
<dbReference type="GO" id="GO:0030030">
    <property type="term" value="P:cell projection organization"/>
    <property type="evidence" value="ECO:0000315"/>
    <property type="project" value="MGI"/>
</dbReference>
<dbReference type="GO" id="GO:0090102">
    <property type="term" value="P:cochlea development"/>
    <property type="evidence" value="ECO:0000315"/>
    <property type="project" value="MGI"/>
</dbReference>
<dbReference type="GO" id="GO:0050957">
    <property type="term" value="P:equilibrioception"/>
    <property type="evidence" value="ECO:0007669"/>
    <property type="project" value="Ensembl"/>
</dbReference>
<dbReference type="GO" id="GO:0042491">
    <property type="term" value="P:inner ear auditory receptor cell differentiation"/>
    <property type="evidence" value="ECO:0000315"/>
    <property type="project" value="MGI"/>
</dbReference>
<dbReference type="GO" id="GO:0048839">
    <property type="term" value="P:inner ear development"/>
    <property type="evidence" value="ECO:0000315"/>
    <property type="project" value="MGI"/>
</dbReference>
<dbReference type="GO" id="GO:0042472">
    <property type="term" value="P:inner ear morphogenesis"/>
    <property type="evidence" value="ECO:0000315"/>
    <property type="project" value="MGI"/>
</dbReference>
<dbReference type="GO" id="GO:0060113">
    <property type="term" value="P:inner ear receptor cell differentiation"/>
    <property type="evidence" value="ECO:0000315"/>
    <property type="project" value="MGI"/>
</dbReference>
<dbReference type="GO" id="GO:0060122">
    <property type="term" value="P:inner ear receptor cell stereocilium organization"/>
    <property type="evidence" value="ECO:0000315"/>
    <property type="project" value="MGI"/>
</dbReference>
<dbReference type="GO" id="GO:0006886">
    <property type="term" value="P:intracellular protein transport"/>
    <property type="evidence" value="ECO:0000315"/>
    <property type="project" value="MGI"/>
</dbReference>
<dbReference type="GO" id="GO:0007040">
    <property type="term" value="P:lysosome organization"/>
    <property type="evidence" value="ECO:0000250"/>
    <property type="project" value="UniProtKB"/>
</dbReference>
<dbReference type="GO" id="GO:0042490">
    <property type="term" value="P:mechanoreceptor differentiation"/>
    <property type="evidence" value="ECO:0000315"/>
    <property type="project" value="MGI"/>
</dbReference>
<dbReference type="GO" id="GO:0006909">
    <property type="term" value="P:phagocytosis"/>
    <property type="evidence" value="ECO:0000315"/>
    <property type="project" value="MGI"/>
</dbReference>
<dbReference type="GO" id="GO:0001845">
    <property type="term" value="P:phagolysosome assembly"/>
    <property type="evidence" value="ECO:0000315"/>
    <property type="project" value="MGI"/>
</dbReference>
<dbReference type="GO" id="GO:0051875">
    <property type="term" value="P:pigment granule localization"/>
    <property type="evidence" value="ECO:0000315"/>
    <property type="project" value="MGI"/>
</dbReference>
<dbReference type="GO" id="GO:0051904">
    <property type="term" value="P:pigment granule transport"/>
    <property type="evidence" value="ECO:0000315"/>
    <property type="project" value="MGI"/>
</dbReference>
<dbReference type="GO" id="GO:0008104">
    <property type="term" value="P:protein localization"/>
    <property type="evidence" value="ECO:0000314"/>
    <property type="project" value="UniProtKB"/>
</dbReference>
<dbReference type="GO" id="GO:0007600">
    <property type="term" value="P:sensory perception"/>
    <property type="evidence" value="ECO:0000315"/>
    <property type="project" value="MGI"/>
</dbReference>
<dbReference type="GO" id="GO:0050953">
    <property type="term" value="P:sensory perception of light stimulus"/>
    <property type="evidence" value="ECO:0000315"/>
    <property type="project" value="MGI"/>
</dbReference>
<dbReference type="GO" id="GO:0007605">
    <property type="term" value="P:sensory perception of sound"/>
    <property type="evidence" value="ECO:0000315"/>
    <property type="project" value="MGI"/>
</dbReference>
<dbReference type="GO" id="GO:0007601">
    <property type="term" value="P:visual perception"/>
    <property type="evidence" value="ECO:0000315"/>
    <property type="project" value="MGI"/>
</dbReference>
<dbReference type="CDD" id="cd17092">
    <property type="entry name" value="FERM1_F1_Myosin-VII"/>
    <property type="match status" value="1"/>
</dbReference>
<dbReference type="CDD" id="cd17093">
    <property type="entry name" value="FERM2_F1_Myosin-VII"/>
    <property type="match status" value="1"/>
</dbReference>
<dbReference type="CDD" id="cd14473">
    <property type="entry name" value="FERM_B-lobe"/>
    <property type="match status" value="2"/>
</dbReference>
<dbReference type="CDD" id="cd13198">
    <property type="entry name" value="FERM_C1_MyoVII"/>
    <property type="match status" value="1"/>
</dbReference>
<dbReference type="CDD" id="cd13199">
    <property type="entry name" value="FERM_C2_MyoVII"/>
    <property type="match status" value="1"/>
</dbReference>
<dbReference type="CDD" id="cd01381">
    <property type="entry name" value="MYSc_Myo7"/>
    <property type="match status" value="1"/>
</dbReference>
<dbReference type="CDD" id="cd11881">
    <property type="entry name" value="SH3_MYO7A"/>
    <property type="match status" value="1"/>
</dbReference>
<dbReference type="CDD" id="cd22249">
    <property type="entry name" value="UDM1_RNF168_RNF169-like"/>
    <property type="match status" value="1"/>
</dbReference>
<dbReference type="FunFam" id="1.10.10.820:FF:000001">
    <property type="entry name" value="Myosin heavy chain"/>
    <property type="match status" value="1"/>
</dbReference>
<dbReference type="FunFam" id="1.20.80.10:FF:000012">
    <property type="entry name" value="Myosin VIIA"/>
    <property type="match status" value="1"/>
</dbReference>
<dbReference type="FunFam" id="1.25.40.530:FF:000004">
    <property type="entry name" value="Myosin VIIA"/>
    <property type="match status" value="1"/>
</dbReference>
<dbReference type="FunFam" id="3.40.850.10:FF:000007">
    <property type="entry name" value="Myosin VIIA"/>
    <property type="match status" value="1"/>
</dbReference>
<dbReference type="FunFam" id="1.20.120.720:FF:000008">
    <property type="entry name" value="Unconventional myosin-VIIa"/>
    <property type="match status" value="1"/>
</dbReference>
<dbReference type="FunFam" id="1.20.80.10:FF:000013">
    <property type="entry name" value="Unconventional myosin-VIIa"/>
    <property type="match status" value="1"/>
</dbReference>
<dbReference type="FunFam" id="3.10.20.90:FF:000036">
    <property type="entry name" value="Unconventional myosin-VIIa"/>
    <property type="match status" value="1"/>
</dbReference>
<dbReference type="FunFam" id="3.10.20.90:FF:000051">
    <property type="entry name" value="Unconventional myosin-VIIa"/>
    <property type="match status" value="1"/>
</dbReference>
<dbReference type="FunFam" id="2.30.29.30:FF:000079">
    <property type="entry name" value="unconventional myosin-VIIa"/>
    <property type="match status" value="1"/>
</dbReference>
<dbReference type="FunFam" id="2.30.30.40:FF:000113">
    <property type="entry name" value="unconventional myosin-VIIa"/>
    <property type="match status" value="1"/>
</dbReference>
<dbReference type="Gene3D" id="1.10.10.820">
    <property type="match status" value="1"/>
</dbReference>
<dbReference type="Gene3D" id="1.20.5.190">
    <property type="match status" value="1"/>
</dbReference>
<dbReference type="Gene3D" id="1.20.58.530">
    <property type="match status" value="1"/>
</dbReference>
<dbReference type="Gene3D" id="1.20.80.10">
    <property type="match status" value="2"/>
</dbReference>
<dbReference type="Gene3D" id="6.20.240.20">
    <property type="match status" value="1"/>
</dbReference>
<dbReference type="Gene3D" id="3.40.850.10">
    <property type="entry name" value="Kinesin motor domain"/>
    <property type="match status" value="1"/>
</dbReference>
<dbReference type="Gene3D" id="1.20.120.720">
    <property type="entry name" value="Myosin VI head, motor domain, U50 subdomain"/>
    <property type="match status" value="1"/>
</dbReference>
<dbReference type="Gene3D" id="1.25.40.530">
    <property type="entry name" value="MyTH4 domain"/>
    <property type="match status" value="2"/>
</dbReference>
<dbReference type="Gene3D" id="3.10.20.90">
    <property type="entry name" value="Phosphatidylinositol 3-kinase Catalytic Subunit, Chain A, domain 1"/>
    <property type="match status" value="2"/>
</dbReference>
<dbReference type="Gene3D" id="2.30.29.30">
    <property type="entry name" value="Pleckstrin-homology domain (PH domain)/Phosphotyrosine-binding domain (PTB)"/>
    <property type="match status" value="2"/>
</dbReference>
<dbReference type="Gene3D" id="2.30.30.40">
    <property type="entry name" value="SH3 Domains"/>
    <property type="match status" value="1"/>
</dbReference>
<dbReference type="InterPro" id="IPR019749">
    <property type="entry name" value="Band_41_domain"/>
</dbReference>
<dbReference type="InterPro" id="IPR014352">
    <property type="entry name" value="FERM/acyl-CoA-bd_prot_sf"/>
</dbReference>
<dbReference type="InterPro" id="IPR035963">
    <property type="entry name" value="FERM_2"/>
</dbReference>
<dbReference type="InterPro" id="IPR019748">
    <property type="entry name" value="FERM_central"/>
</dbReference>
<dbReference type="InterPro" id="IPR000299">
    <property type="entry name" value="FERM_domain"/>
</dbReference>
<dbReference type="InterPro" id="IPR000048">
    <property type="entry name" value="IQ_motif_EF-hand-BS"/>
</dbReference>
<dbReference type="InterPro" id="IPR002404">
    <property type="entry name" value="IRS_PTB"/>
</dbReference>
<dbReference type="InterPro" id="IPR036961">
    <property type="entry name" value="Kinesin_motor_dom_sf"/>
</dbReference>
<dbReference type="InterPro" id="IPR001609">
    <property type="entry name" value="Myosin_head_motor_dom-like"/>
</dbReference>
<dbReference type="InterPro" id="IPR041793">
    <property type="entry name" value="MyoVII_FERM_C1"/>
</dbReference>
<dbReference type="InterPro" id="IPR041794">
    <property type="entry name" value="MyoVII_FERM_C2"/>
</dbReference>
<dbReference type="InterPro" id="IPR036106">
    <property type="entry name" value="MYSc_Myo7"/>
</dbReference>
<dbReference type="InterPro" id="IPR000857">
    <property type="entry name" value="MyTH4_dom"/>
</dbReference>
<dbReference type="InterPro" id="IPR038185">
    <property type="entry name" value="MyTH4_dom_sf"/>
</dbReference>
<dbReference type="InterPro" id="IPR027417">
    <property type="entry name" value="P-loop_NTPase"/>
</dbReference>
<dbReference type="InterPro" id="IPR011993">
    <property type="entry name" value="PH-like_dom_sf"/>
</dbReference>
<dbReference type="InterPro" id="IPR036028">
    <property type="entry name" value="SH3-like_dom_sf"/>
</dbReference>
<dbReference type="InterPro" id="IPR001452">
    <property type="entry name" value="SH3_domain"/>
</dbReference>
<dbReference type="InterPro" id="IPR029071">
    <property type="entry name" value="Ubiquitin-like_domsf"/>
</dbReference>
<dbReference type="InterPro" id="IPR051567">
    <property type="entry name" value="Unconventional_Myosin_ATPase"/>
</dbReference>
<dbReference type="PANTHER" id="PTHR22692">
    <property type="entry name" value="MYOSIN VII, XV"/>
    <property type="match status" value="1"/>
</dbReference>
<dbReference type="PANTHER" id="PTHR22692:SF34">
    <property type="entry name" value="MYOSIN VIIA"/>
    <property type="match status" value="1"/>
</dbReference>
<dbReference type="Pfam" id="PF21998">
    <property type="entry name" value="FERM_C1_MyoVII"/>
    <property type="match status" value="2"/>
</dbReference>
<dbReference type="Pfam" id="PF00373">
    <property type="entry name" value="FERM_M"/>
    <property type="match status" value="1"/>
</dbReference>
<dbReference type="Pfam" id="PF00612">
    <property type="entry name" value="IQ"/>
    <property type="match status" value="3"/>
</dbReference>
<dbReference type="Pfam" id="PF02174">
    <property type="entry name" value="IRS"/>
    <property type="match status" value="1"/>
</dbReference>
<dbReference type="Pfam" id="PF00063">
    <property type="entry name" value="Myosin_head"/>
    <property type="match status" value="1"/>
</dbReference>
<dbReference type="Pfam" id="PF24123">
    <property type="entry name" value="Myosin_VII_N"/>
    <property type="match status" value="1"/>
</dbReference>
<dbReference type="Pfam" id="PF00784">
    <property type="entry name" value="MyTH4"/>
    <property type="match status" value="2"/>
</dbReference>
<dbReference type="Pfam" id="PF21989">
    <property type="entry name" value="RA_2"/>
    <property type="match status" value="2"/>
</dbReference>
<dbReference type="PRINTS" id="PR00193">
    <property type="entry name" value="MYOSINHEAVY"/>
</dbReference>
<dbReference type="SMART" id="SM00295">
    <property type="entry name" value="B41"/>
    <property type="match status" value="2"/>
</dbReference>
<dbReference type="SMART" id="SM00015">
    <property type="entry name" value="IQ"/>
    <property type="match status" value="4"/>
</dbReference>
<dbReference type="SMART" id="SM00242">
    <property type="entry name" value="MYSc"/>
    <property type="match status" value="1"/>
</dbReference>
<dbReference type="SMART" id="SM00139">
    <property type="entry name" value="MyTH4"/>
    <property type="match status" value="2"/>
</dbReference>
<dbReference type="SMART" id="SM00326">
    <property type="entry name" value="SH3"/>
    <property type="match status" value="1"/>
</dbReference>
<dbReference type="SUPFAM" id="SSF52540">
    <property type="entry name" value="P-loop containing nucleoside triphosphate hydrolases"/>
    <property type="match status" value="2"/>
</dbReference>
<dbReference type="SUPFAM" id="SSF50729">
    <property type="entry name" value="PH domain-like"/>
    <property type="match status" value="1"/>
</dbReference>
<dbReference type="SUPFAM" id="SSF47031">
    <property type="entry name" value="Second domain of FERM"/>
    <property type="match status" value="2"/>
</dbReference>
<dbReference type="SUPFAM" id="SSF50044">
    <property type="entry name" value="SH3-domain"/>
    <property type="match status" value="1"/>
</dbReference>
<dbReference type="SUPFAM" id="SSF54236">
    <property type="entry name" value="Ubiquitin-like"/>
    <property type="match status" value="2"/>
</dbReference>
<dbReference type="PROSITE" id="PS50057">
    <property type="entry name" value="FERM_3"/>
    <property type="match status" value="2"/>
</dbReference>
<dbReference type="PROSITE" id="PS50096">
    <property type="entry name" value="IQ"/>
    <property type="match status" value="3"/>
</dbReference>
<dbReference type="PROSITE" id="PS51456">
    <property type="entry name" value="MYOSIN_MOTOR"/>
    <property type="match status" value="1"/>
</dbReference>
<dbReference type="PROSITE" id="PS51016">
    <property type="entry name" value="MYTH4"/>
    <property type="match status" value="2"/>
</dbReference>
<dbReference type="PROSITE" id="PS50002">
    <property type="entry name" value="SH3"/>
    <property type="match status" value="1"/>
</dbReference>
<sequence>MVILQKGDYVWMDLKSGQEFDVPIGAVVKLCDSGQIQVVDDEDNEHWISPQNATHIKPMHPTSVHGVEDMIRLGDLNEAGILRNLLIRYRDHLIYTYTGSILVAVNPYQLLSIYSPEHIRQYTNKKIGEMPPHIFAIADNCYFNMKRNNRDQCCIISGESGAGKTESTKLILQFLAAISGQHSWIEQQVLEATPILEAFGNAKTIRNDNSSRFGKYIDIHFNKRGAIEGAKIEQYLLEKSRVCRQAPDERNYHVFYCMLEGMNEEEKKKLGLGQAADYNYLAMGNCITCEGRVDSQEYANIRSAMKVLMFTDTENWEISKLLAAILHMGNLQYEARTFENLDACEVLFSPSLATAASLLEVNPPDLMSCLTSRTLITRGETVSTPLSREQALDVRDAFVKGIYGRLFVWIVEKINAAIYKPPPLEVKNSRRSIGLLDIFGFENFTVNSFEQLCINFANEHLQQFFVRHVFKLEQEEYDLESIDWLHIEFTDNQEALDMIANRPMNVISLIDEESKFPKGTDATMLHKLNSQHKLNANYVPPKNSHETQFGINHFAGVVYYESQGFLEKNRDTLHGDIIQLVHSSRNKFIKQIFQADVAMGAETRKRSPTLSSQFKRSLELLMRTLGACQPFFVRCIKPNEFKKPMLFDRHLCVRQLRYSGMMETIRIRHAGYPIRYSFVEFVERYRVLLPGVKPAYKQGDLRGTCQRMAEAVLGTHDDWQIGKTKIFLKDHHDMLLEVERDKAITDRVILLQKVIRGFKDRSNFLRLKSAATLIQRHWRGHHCRKNYELIRLGFLRLQALHRSRKLHKQYRLARQRIIEFQARCRAYLVRKAFRHRLWAVITVQAYARGMIARRLHRRLRVEYQRRLEAERMRLAEEEKLRKEMSAKKAKEEAERKHQERLAQLAREDAERELKEKEEARRKKELLEQMEKARHEPINHSDMVDKMFGFLGTSGSLPGQEGQAPSGFEDLERGRREMVEEDVDAALPLPDEDEEDLSEYKFAKFAATYFQGTTTHSYTRRPLKQPLLYHDDEGDQLAALAVWITILRFMGDLPEPKYHTAMSDGSEKIPVMTKIYETLGKKTYKRELQALQGEGETQLPEGQKKTSVRHKLVHLTLKKKSKLTEEVTKRLNDGESTVQGNSMLEDRPTSNLEKLHFIIGNGILRPALRDEIYCQISKQLTHNPSKSSYARGWILVSLCVGCFAPSEKFVKYLRNFIHGGPPGYAPYCEERLRRTFVNGTRTQPPSWLELQATKSKKPIMLPVTFMDGTTKTLLTDSATTARELCNALADKISLKDRFGFSLYIALFDKVSSLGSGSDHVMDAISQCEQYAKEQGAQERNAPWRLFFRKEVFTPWHNPSEDNVATNLIYQQVVRGVKFGEYRCEKEDDLAELASQQYFVDYGSEMILERLLSLVPTYIPDREITPLKNLEKWAQLAIAAHKKGIYAQRRTDSQKVKEDVVNYARFKWPLLFSRFYEAYKFSGPPLPKSDVIVAVNWTGVYFVDEQEQVLLELSFPEIMAVSSSRECRVLLSLGCSDLGCATCQSGRAGLTPAGPCSPCWSCRGTKMMAPSFTLATIKGDEYTFTSSNAEDIRDLVVTFLEGLRKRSKYVVALQDNPNPAGEESGFLSFAKGDLIILDHDTGEQVMNSGWANGINERTKQRGDFPTDCVYVMPTVTLPPREIVALVTMTPDQRQDVVRLLQLRTAEPEVRAKPYTLEEFSYDYFRPPPKHTLSRVMVSKARGKDRLWSHTREPLKQALLKKILGSEELSQEACMAFVAVLKYMGDYPSKRMRSVNELTDQIFEWALKAEPLKDEAYVQILKQLTDNHIRYSEERGWELLWLCTGLFPPSNILLPHVQRFLQSRKHCPLAIDCLQRLQKALRNGSRKYPPHLVEVEAIQHKTTQIFHKVYFPDDTDEAFEVESSTKAKDFCQNIASRLLLKSSEGFSLFVKIADKVISVPENDFFFDFVRHLTDWIKKARPIKDGIVPSLTYQVFFMKKLWTTTVPGKDPMADSIFHYYQELPKYLRGYHKCTREEVLQLGALIYRVKFEEDKSYFPSIPKLLRELVPQDLIRQVSPDDWKRSIVAYFNKHAGKSKEEAKLAFLKLIFKWPTFGSAFFEVKQTTEPNFPEILLIAINKYGVSLIDPRTKDILTTHPFTKISNWSSGNTYFHITIGNLVRGSKLLCETSLGYKMDDLLTSYISQMLTAMSKQRNSRSGR</sequence>
<organism>
    <name type="scientific">Mus musculus</name>
    <name type="common">Mouse</name>
    <dbReference type="NCBI Taxonomy" id="10090"/>
    <lineage>
        <taxon>Eukaryota</taxon>
        <taxon>Metazoa</taxon>
        <taxon>Chordata</taxon>
        <taxon>Craniata</taxon>
        <taxon>Vertebrata</taxon>
        <taxon>Euteleostomi</taxon>
        <taxon>Mammalia</taxon>
        <taxon>Eutheria</taxon>
        <taxon>Euarchontoglires</taxon>
        <taxon>Glires</taxon>
        <taxon>Rodentia</taxon>
        <taxon>Myomorpha</taxon>
        <taxon>Muroidea</taxon>
        <taxon>Muridae</taxon>
        <taxon>Murinae</taxon>
        <taxon>Mus</taxon>
        <taxon>Mus</taxon>
    </lineage>
</organism>
<keyword id="KW-0002">3D-structure</keyword>
<keyword id="KW-0009">Actin-binding</keyword>
<keyword id="KW-0025">Alternative splicing</keyword>
<keyword id="KW-0067">ATP-binding</keyword>
<keyword id="KW-0112">Calmodulin-binding</keyword>
<keyword id="KW-0963">Cytoplasm</keyword>
<keyword id="KW-0206">Cytoskeleton</keyword>
<keyword id="KW-0209">Deafness</keyword>
<keyword id="KW-0225">Disease variant</keyword>
<keyword id="KW-1009">Hearing</keyword>
<keyword id="KW-0505">Motor protein</keyword>
<keyword id="KW-0518">Myosin</keyword>
<keyword id="KW-0547">Nucleotide-binding</keyword>
<keyword id="KW-0597">Phosphoprotein</keyword>
<keyword id="KW-1185">Reference proteome</keyword>
<keyword id="KW-0677">Repeat</keyword>
<keyword id="KW-0728">SH3 domain</keyword>
<keyword id="KW-0770">Synapse</keyword>
<keyword id="KW-0813">Transport</keyword>
<proteinExistence type="evidence at protein level"/>
<protein>
    <recommendedName>
        <fullName>Unconventional myosin-VIIa</fullName>
    </recommendedName>
</protein>
<name>MYO7A_MOUSE</name>
<gene>
    <name type="primary">Myo7a</name>
    <name type="synonym">Myo7</name>
</gene>
<comment type="function">
    <text evidence="16 17 19">Myosins are actin-based motor molecules with ATPase activity. Unconventional myosins serve in intracellular movements. Their highly divergent tails bind to membranous compartments, which are then moved relative to actin filaments. In the retina, plays an important role in the renewal of the outer photoreceptor disks. Plays an important role in the distribution and migration of retinal pigment epithelial (RPE) melanosomes and phagosomes, and in the regulation of opsin transport in retinal photoreceptors. Mediates intracellular transport of RPE65 in the retina pigment epithelium. In the inner ear, plays an important role in differentiation, morphogenesis and organization of cochlear hair cell bundles. Motor protein that is a part of the functional network formed by USH1C, USH1G, CDH23 and MYO7A that mediates mechanotransduction in cochlear hair cells. Required for normal hearing. Involved in hair-cell vesicle trafficking of aminoglycosides, which are known to induce ototoxicity.</text>
</comment>
<comment type="subunit">
    <text evidence="1 2 8 9 11 12 13 14 15 16 18 19">Might homodimerize in a two headed molecule through the formation of a coiled-coil rod (By similarity). Identified in a complex with USH1C and USH1G (By similarity). Interacts with MYRIP (PubMed:12221080). Interacts with RPE65 (PubMed:21493626). Interacts with CIB2 (By similarity). May interact with CALM (By similarity). Interacts with WHRN (PubMed:15590698). Interacts with PLEKHB1 (via PH domain) (PubMed:15976448). Interacts with PCDH15 (PubMed:16481439). Interacts with TWF2 (PubMed:19774077). Interacts with USH1G (PubMed:21311020). Interacts with MYH9 (PubMed:27331610). Interacts (via MyTH4-FERM domains) with cytoplasmic regions of ADGRV1 and USH2A (PubMed:17567809). Interacts with PDZD7 (via MyTH4-FERM domains) (PubMed:27525485). Interacts with CALML4 (By similarity).</text>
</comment>
<comment type="interaction">
    <interactant intactId="EBI-1149557">
        <id>P97479</id>
    </interactant>
    <interactant intactId="EBI-8401821">
        <id>O70309</id>
        <label>Itgb5</label>
    </interactant>
    <organismsDiffer>false</organismsDiffer>
    <experiments>3</experiments>
</comment>
<comment type="interaction">
    <interactant intactId="EBI-1149557">
        <id>P97479</id>
    </interactant>
    <interactant intactId="EBI-11682496">
        <id>Q91ZQ5</id>
        <label>Rpe65</label>
    </interactant>
    <organismsDiffer>false</organismsDiffer>
    <experiments>3</experiments>
</comment>
<comment type="interaction">
    <interactant intactId="EBI-1149557">
        <id>P97479</id>
    </interactant>
    <interactant intactId="EBI-7418889">
        <id>Q80T11</id>
        <label>Ush1g</label>
    </interactant>
    <organismsDiffer>false</organismsDiffer>
    <experiments>4</experiments>
</comment>
<comment type="interaction">
    <interactant intactId="EBI-1149557">
        <id>P97479</id>
    </interactant>
    <interactant intactId="EBI-1223434">
        <id>P18084</id>
        <label>ITGB5</label>
    </interactant>
    <organismsDiffer>true</organismsDiffer>
    <experiments>8</experiments>
</comment>
<comment type="subcellular location">
    <subcellularLocation>
        <location evidence="17">Cytoplasm</location>
    </subcellularLocation>
    <subcellularLocation>
        <location evidence="17">Cytoplasm</location>
        <location evidence="17">Cell cortex</location>
    </subcellularLocation>
    <subcellularLocation>
        <location evidence="17">Cytoplasm</location>
        <location evidence="17">Cytoskeleton</location>
    </subcellularLocation>
    <subcellularLocation>
        <location evidence="2">Synapse</location>
    </subcellularLocation>
    <text evidence="2 19">In the photoreceptor cells, mainly localized in the inner and base of outer segments as well as in the synaptic ending region (By similarity). In retinal pigment epithelial cells colocalizes with a subset of melanosomes, displays predominant localization to stress fiber-like structures and some localization to cytoplasmic puncta (By similarity). Detected at the tip of cochlear hair cell stereocilia (PubMed:27525485). The complex formed by MYO7A, USH1C and USH1G colocalizes with F-actin (By similarity).</text>
</comment>
<comment type="alternative products">
    <event type="alternative splicing"/>
    <isoform>
        <id>P97479-1</id>
        <name>1</name>
        <sequence type="displayed"/>
    </isoform>
    <isoform>
        <id>P97479-2</id>
        <name>2</name>
        <sequence type="described" ref="VSP_042238"/>
    </isoform>
</comment>
<comment type="tissue specificity">
    <text evidence="10 16 17">Detected in mechanosensory stereocilia of cochlea hair cells (at protein level). Expressed in the retina, cochlea, kidney and liver.</text>
</comment>
<comment type="developmental stage">
    <text>In the inner ear of the 16.5 day old embryo, expressed only in the cochlear and vestibular sensory hair cells. In addition, expression also occurs in the epithelial cells of the small intestine, hepatocytes, and choroidal plexus.</text>
</comment>
<comment type="domain">
    <text evidence="2">The SAH (single alpha-helix) region is characterized by a high content of charged residues which are predicted to stabilize the alpha-helical structure by ionic bonds.</text>
</comment>
<comment type="disease">
    <text evidence="20">Defects in Myo7a are the cause of the shaker-1 (sh-1) phenotype which affects only the inner ear. Sh-1 homozygote mutants show hyperactivity, head tossing and circling due to vestibular dysfunction, together with typical neuroepithelial-type cochlear defects involving dysfunction and progressive degeneration of the organ of Corti.</text>
</comment>
<comment type="similarity">
    <text evidence="22">Belongs to the TRAFAC class myosin-kinesin ATPase superfamily. Myosin family.</text>
</comment>
<comment type="caution">
    <text evidence="22">Represents an unconventional myosin. This protein should not be confused with the conventional myosin-7 (MYH7).</text>
</comment>
<comment type="caution">
    <text evidence="22">Originally predicted to contain a coiled coil domain but proposed to contain a stable SAH domain instead.</text>
</comment>
<evidence type="ECO:0000250" key="1"/>
<evidence type="ECO:0000250" key="2">
    <source>
        <dbReference type="UniProtKB" id="Q13402"/>
    </source>
</evidence>
<evidence type="ECO:0000255" key="3">
    <source>
        <dbReference type="PROSITE-ProRule" id="PRU00084"/>
    </source>
</evidence>
<evidence type="ECO:0000255" key="4">
    <source>
        <dbReference type="PROSITE-ProRule" id="PRU00116"/>
    </source>
</evidence>
<evidence type="ECO:0000255" key="5">
    <source>
        <dbReference type="PROSITE-ProRule" id="PRU00192"/>
    </source>
</evidence>
<evidence type="ECO:0000255" key="6">
    <source>
        <dbReference type="PROSITE-ProRule" id="PRU00359"/>
    </source>
</evidence>
<evidence type="ECO:0000255" key="7">
    <source>
        <dbReference type="PROSITE-ProRule" id="PRU00782"/>
    </source>
</evidence>
<evidence type="ECO:0000269" key="8">
    <source>
    </source>
</evidence>
<evidence type="ECO:0000269" key="9">
    <source>
    </source>
</evidence>
<evidence type="ECO:0000269" key="10">
    <source>
    </source>
</evidence>
<evidence type="ECO:0000269" key="11">
    <source>
    </source>
</evidence>
<evidence type="ECO:0000269" key="12">
    <source>
    </source>
</evidence>
<evidence type="ECO:0000269" key="13">
    <source>
    </source>
</evidence>
<evidence type="ECO:0000269" key="14">
    <source>
    </source>
</evidence>
<evidence type="ECO:0000269" key="15">
    <source>
    </source>
</evidence>
<evidence type="ECO:0000269" key="16">
    <source>
    </source>
</evidence>
<evidence type="ECO:0000269" key="17">
    <source>
    </source>
</evidence>
<evidence type="ECO:0000269" key="18">
    <source>
    </source>
</evidence>
<evidence type="ECO:0000269" key="19">
    <source>
    </source>
</evidence>
<evidence type="ECO:0000269" key="20">
    <source>
    </source>
</evidence>
<evidence type="ECO:0000303" key="21">
    <source>
    </source>
</evidence>
<evidence type="ECO:0000305" key="22"/>
<evidence type="ECO:0007744" key="23">
    <source>
    </source>
</evidence>
<evidence type="ECO:0007829" key="24">
    <source>
        <dbReference type="PDB" id="3PVL"/>
    </source>
</evidence>
<evidence type="ECO:0007829" key="25">
    <source>
        <dbReference type="PDB" id="5WST"/>
    </source>
</evidence>
<evidence type="ECO:0007829" key="26">
    <source>
        <dbReference type="PDB" id="5WSV"/>
    </source>
</evidence>
<reference key="1">
    <citation type="journal article" date="1995" name="Nature">
        <title>A type VII myosin encoded by the mouse deafness gene shaker-1.</title>
        <authorList>
            <person name="Gibson F."/>
            <person name="Walsh J."/>
            <person name="Mburu P."/>
            <person name="Varela A."/>
            <person name="Brown K.A."/>
            <person name="Antonio M."/>
            <person name="Beisel K.W."/>
            <person name="Steel K.P."/>
            <person name="Brown S.D.M."/>
        </authorList>
    </citation>
    <scope>NUCLEOTIDE SEQUENCE [MRNA] (ISOFORM 1)</scope>
    <scope>DISEASE</scope>
</reference>
<reference key="2">
    <citation type="journal article" date="1997" name="Genes Funct.">
        <title>Mutation analysis of the mouse myosin VIIA deafness gene.</title>
        <authorList>
            <person name="Mburu P."/>
            <person name="Liu X.-Z."/>
            <person name="Walsh J."/>
            <person name="Saw D. Jr."/>
            <person name="Cope M.J."/>
            <person name="Gibson F."/>
            <person name="Kendrick-Jones J."/>
            <person name="Steel K.P."/>
            <person name="Brown S.D.M."/>
        </authorList>
    </citation>
    <scope>NUCLEOTIDE SEQUENCE [MRNA] (ISOFORM 1)</scope>
</reference>
<reference key="3">
    <citation type="journal article" date="2009" name="PLoS Biol.">
        <title>Lineage-specific biology revealed by a finished genome assembly of the mouse.</title>
        <authorList>
            <person name="Church D.M."/>
            <person name="Goodstadt L."/>
            <person name="Hillier L.W."/>
            <person name="Zody M.C."/>
            <person name="Goldstein S."/>
            <person name="She X."/>
            <person name="Bult C.J."/>
            <person name="Agarwala R."/>
            <person name="Cherry J.L."/>
            <person name="DiCuccio M."/>
            <person name="Hlavina W."/>
            <person name="Kapustin Y."/>
            <person name="Meric P."/>
            <person name="Maglott D."/>
            <person name="Birtle Z."/>
            <person name="Marques A.C."/>
            <person name="Graves T."/>
            <person name="Zhou S."/>
            <person name="Teague B."/>
            <person name="Potamousis K."/>
            <person name="Churas C."/>
            <person name="Place M."/>
            <person name="Herschleb J."/>
            <person name="Runnheim R."/>
            <person name="Forrest D."/>
            <person name="Amos-Landgraf J."/>
            <person name="Schwartz D.C."/>
            <person name="Cheng Z."/>
            <person name="Lindblad-Toh K."/>
            <person name="Eichler E.E."/>
            <person name="Ponting C.P."/>
        </authorList>
    </citation>
    <scope>NUCLEOTIDE SEQUENCE [LARGE SCALE GENOMIC DNA]</scope>
    <source>
        <strain>C57BL/6J</strain>
    </source>
</reference>
<reference key="4">
    <citation type="journal article" date="2005" name="Nat. Cell Biol.">
        <title>Myosin-XVa is required for tip localization of whirlin and differential elongation of hair-cell stereocilia.</title>
        <authorList>
            <person name="Belyantseva I.A."/>
            <person name="Boger E.T."/>
            <person name="Naz S."/>
            <person name="Frolenkov G.I."/>
            <person name="Sellers J.R."/>
            <person name="Ahmed Z.M."/>
            <person name="Griffith A.J."/>
            <person name="Friedman T.B."/>
        </authorList>
    </citation>
    <scope>NUCLEOTIDE SEQUENCE [MRNA] OF 12-2215 (ISOFORM 2)</scope>
    <scope>TISSUE SPECIFICITY</scope>
    <source>
        <strain>C57BL/6J</strain>
        <tissue>Inner ear</tissue>
    </source>
</reference>
<reference key="5">
    <citation type="journal article" date="2002" name="J. Biol. Chem.">
        <title>Slac2-c (synaptotagmin-like protein homologue lacking C2 domains-c), a novel linker protein that interacts with Rab27, myosin Va/VIIa, and actin.</title>
        <authorList>
            <person name="Fukuda M."/>
            <person name="Kuroda T.S."/>
        </authorList>
    </citation>
    <scope>INTERACTION WITH MYRIP</scope>
</reference>
<reference key="6">
    <citation type="journal article" date="2005" name="Hum. Mol. Genet.">
        <title>Myosin XVa and whirlin, two deafness gene products required for hair bundle growth, are located at the stereocilia tips and interact directly.</title>
        <authorList>
            <person name="Delprat B."/>
            <person name="Michel V."/>
            <person name="Goodyear R."/>
            <person name="Yamasaki Y."/>
            <person name="Michalski N."/>
            <person name="El-Amraoui A."/>
            <person name="Perfettini I."/>
            <person name="Legrain P."/>
            <person name="Richardson G."/>
            <person name="Hardelin J.-P."/>
            <person name="Petit C."/>
        </authorList>
    </citation>
    <scope>INTERACTION WITH WHRN</scope>
</reference>
<reference key="7">
    <citation type="journal article" date="2005" name="J. Cell Sci.">
        <title>PHR1, an integral membrane protein of the inner ear sensory cells, directly interacts with myosin 1c and myosin VIIa.</title>
        <authorList>
            <person name="Etournay R."/>
            <person name="El-Amraoui A."/>
            <person name="Bahloul A."/>
            <person name="Blanchard S."/>
            <person name="Roux I."/>
            <person name="Pezeron G."/>
            <person name="Michalski N."/>
            <person name="Daviet L."/>
            <person name="Hardelin J.-P."/>
            <person name="Legrain P."/>
            <person name="Petit C."/>
        </authorList>
    </citation>
    <scope>INTERACTION WITH PLEKHB1</scope>
</reference>
<reference key="8">
    <citation type="journal article" date="2006" name="J. Neurosci.">
        <title>Physical and functional interaction between protocadherin 15 and myosin VIIa in mechanosensory hair cells.</title>
        <authorList>
            <person name="Senften M."/>
            <person name="Schwander M."/>
            <person name="Kazmierczak P."/>
            <person name="Lillo C."/>
            <person name="Shin J.B."/>
            <person name="Hasson T."/>
            <person name="Geleoc G.S."/>
            <person name="Gillespie P.G."/>
            <person name="Williams D."/>
            <person name="Holt J.R."/>
            <person name="Muller U."/>
        </authorList>
    </citation>
    <scope>INTERACTION WITH PCDH15</scope>
</reference>
<reference key="9">
    <citation type="journal article" date="2007" name="J. Neurosci.">
        <title>Molecular characterization of the ankle-link complex in cochlear hair cells and its role in the hair bundle functioning.</title>
        <authorList>
            <person name="Michalski N."/>
            <person name="Michel V."/>
            <person name="Bahloul A."/>
            <person name="Lefevre G."/>
            <person name="Barral J."/>
            <person name="Yagi H."/>
            <person name="Chardenoux S."/>
            <person name="Weil D."/>
            <person name="Martin P."/>
            <person name="Hardelin J.P."/>
            <person name="Sato M."/>
            <person name="Petit C."/>
        </authorList>
    </citation>
    <scope>INTERACTION WITH ADGRV1 AND USH2A</scope>
</reference>
<reference key="10">
    <citation type="journal article" date="2009" name="PLoS ONE">
        <title>MyosinVIIa interacts with Twinfilin-2 at the tips of mechanosensory stereocilia in the inner ear.</title>
        <authorList>
            <person name="Rzadzinska A.K."/>
            <person name="Nevalainen E.M."/>
            <person name="Prosser H.M."/>
            <person name="Lappalainen P."/>
            <person name="Steel K.P."/>
        </authorList>
    </citation>
    <scope>INTERACTION WITH TWF2</scope>
    <source>
        <strain>C3Heb/FeJ</strain>
        <tissue>Inner ear</tissue>
    </source>
</reference>
<reference key="11">
    <citation type="journal article" date="2010" name="Cell">
        <title>A tissue-specific atlas of mouse protein phosphorylation and expression.</title>
        <authorList>
            <person name="Huttlin E.L."/>
            <person name="Jedrychowski M.P."/>
            <person name="Elias J.E."/>
            <person name="Goswami T."/>
            <person name="Rad R."/>
            <person name="Beausoleil S.A."/>
            <person name="Villen J."/>
            <person name="Haas W."/>
            <person name="Sowa M.E."/>
            <person name="Gygi S.P."/>
        </authorList>
    </citation>
    <scope>PHOSPHORYLATION [LARGE SCALE ANALYSIS] AT THR-1563; SER-1569 AND THR-1571</scope>
    <scope>IDENTIFICATION BY MASS SPECTROMETRY [LARGE SCALE ANALYSIS]</scope>
    <source>
        <tissue>Kidney</tissue>
        <tissue>Testis</tissue>
    </source>
</reference>
<reference key="12">
    <citation type="journal article" date="2011" name="Hum. Mol. Genet.">
        <title>The Usher 1B protein, MYO7A, is required for normal localization and function of the visual retinoid cycle enzyme, RPE65.</title>
        <authorList>
            <person name="Lopes V.S."/>
            <person name="Gibbs D."/>
            <person name="Libby R.T."/>
            <person name="Aleman T.S."/>
            <person name="Welch D.L."/>
            <person name="Lillo C."/>
            <person name="Jacobson S.G."/>
            <person name="Radu R.A."/>
            <person name="Steel K.P."/>
            <person name="Williams D.S."/>
        </authorList>
    </citation>
    <scope>FUNCTION</scope>
    <scope>TISSUE SPECIFICITY</scope>
    <scope>INTERACTION WITH RPE65</scope>
</reference>
<reference key="13">
    <citation type="journal article" date="2011" name="Proc. Natl. Acad. Sci. U.S.A.">
        <title>Myosin VIIa and sans localization at stereocilia upper tip-link density implicates these Usher syndrome proteins in mechanotransduction.</title>
        <authorList>
            <person name="Grati M."/>
            <person name="Kachar B."/>
        </authorList>
    </citation>
    <scope>FUNCTION</scope>
    <scope>TISSUE SPECIFICITY</scope>
    <scope>SUBCELLULAR LOCATION</scope>
</reference>
<reference key="14">
    <citation type="journal article" date="2016" name="Elife">
        <title>PDZD7-MYO7A complex identified in enriched stereocilia membranes.</title>
        <authorList>
            <person name="Morgan C.P."/>
            <person name="Krey J.F."/>
            <person name="Grati M."/>
            <person name="Zhao B."/>
            <person name="Fallen S."/>
            <person name="Kannan-Sundhari A."/>
            <person name="Liu X.Z."/>
            <person name="Choi D."/>
            <person name="Mueller U."/>
            <person name="Barr-Gillespie P.G."/>
        </authorList>
    </citation>
    <scope>INTERACTION WITH PDZD7</scope>
    <scope>FUNCTION</scope>
    <scope>SUBCELLULAR LOCATION</scope>
</reference>
<reference key="15">
    <citation type="journal article" date="2016" name="Elife">
        <title>The E3 ligase Ubr3 regulates Usher syndrome and MYH9 disorder proteins in the auditory organs of Drosophila and mammals.</title>
        <authorList>
            <person name="Li T."/>
            <person name="Giagtzoglou N."/>
            <person name="Eberl D.F."/>
            <person name="Jaiswal S.N."/>
            <person name="Cai T."/>
            <person name="Godt D."/>
            <person name="Groves A.K."/>
            <person name="Bellen H.J."/>
        </authorList>
    </citation>
    <scope>INTERACTION WITH MYH9</scope>
</reference>
<reference key="16">
    <citation type="journal article" date="2011" name="Science">
        <title>Structure of MyTH4-FERM domains in myosin VIIa tail bound to cargo.</title>
        <authorList>
            <person name="Wu L."/>
            <person name="Pan L."/>
            <person name="Wei Z."/>
            <person name="Zhang M."/>
        </authorList>
    </citation>
    <scope>X-RAY CRYSTALLOGRAPHY (2.8 ANGSTROMS) OF 965-1687 IN COMPLEX WITH USH1G</scope>
    <scope>INTERACTION WITH USH1G</scope>
    <scope>MUTAGENESIS OF ALA-1189 AND PHE-1473</scope>
</reference>